<comment type="function">
    <text evidence="1">Specifically acetylates 'Lys-40' in alpha-tubulin/mec-12 on the lumenal side of microtubules. Promotes microtubule destabilization and accelerates microtubule dynamics; this activity may be independent of acetylation activity. Acetylates alpha-tubulin with a slow enzymatic rate, due to a catalytic site that is not optimized for acetyl transfer. Enters the microtubule through each end and diffuses quickly throughout the lumen of microtubules. Acetylates only long/old microtubules because of its slow acetylation rate since it does not have time to act on dynamically unstable microtubules before the enzyme is released. Required for the maintenance of touch receptor neurons and possibly other type of neurons involved in locomotion.</text>
</comment>
<comment type="catalytic activity">
    <reaction evidence="1">
        <text>L-lysyl-[alpha-tubulin] + acetyl-CoA = N(6)-acetyl-L-lysyl-[alpha-tubulin] + CoA + H(+)</text>
        <dbReference type="Rhea" id="RHEA:15277"/>
        <dbReference type="Rhea" id="RHEA-COMP:11278"/>
        <dbReference type="Rhea" id="RHEA-COMP:11279"/>
        <dbReference type="ChEBI" id="CHEBI:15378"/>
        <dbReference type="ChEBI" id="CHEBI:29969"/>
        <dbReference type="ChEBI" id="CHEBI:57287"/>
        <dbReference type="ChEBI" id="CHEBI:57288"/>
        <dbReference type="ChEBI" id="CHEBI:61930"/>
        <dbReference type="EC" id="2.3.1.108"/>
    </reaction>
</comment>
<comment type="similarity">
    <text evidence="1">Belongs to the acetyltransferase ATAT1 family.</text>
</comment>
<accession>A8XKM2</accession>
<protein>
    <recommendedName>
        <fullName evidence="1">Alpha-tubulin N-acetyltransferase 2</fullName>
        <shortName evidence="1">Alpha-TAT 2</shortName>
        <shortName evidence="1">TAT 2</shortName>
        <ecNumber evidence="1">2.3.1.108</ecNumber>
    </recommendedName>
    <alternativeName>
        <fullName>Mec-17-like protein</fullName>
    </alternativeName>
</protein>
<reference key="1">
    <citation type="journal article" date="2003" name="PLoS Biol.">
        <title>The genome sequence of Caenorhabditis briggsae: a platform for comparative genomics.</title>
        <authorList>
            <person name="Stein L.D."/>
            <person name="Bao Z."/>
            <person name="Blasiar D."/>
            <person name="Blumenthal T."/>
            <person name="Brent M.R."/>
            <person name="Chen N."/>
            <person name="Chinwalla A."/>
            <person name="Clarke L."/>
            <person name="Clee C."/>
            <person name="Coghlan A."/>
            <person name="Coulson A."/>
            <person name="D'Eustachio P."/>
            <person name="Fitch D.H.A."/>
            <person name="Fulton L.A."/>
            <person name="Fulton R.E."/>
            <person name="Griffiths-Jones S."/>
            <person name="Harris T.W."/>
            <person name="Hillier L.W."/>
            <person name="Kamath R."/>
            <person name="Kuwabara P.E."/>
            <person name="Mardis E.R."/>
            <person name="Marra M.A."/>
            <person name="Miner T.L."/>
            <person name="Minx P."/>
            <person name="Mullikin J.C."/>
            <person name="Plumb R.W."/>
            <person name="Rogers J."/>
            <person name="Schein J.E."/>
            <person name="Sohrmann M."/>
            <person name="Spieth J."/>
            <person name="Stajich J.E."/>
            <person name="Wei C."/>
            <person name="Willey D."/>
            <person name="Wilson R.K."/>
            <person name="Durbin R.M."/>
            <person name="Waterston R.H."/>
        </authorList>
    </citation>
    <scope>NUCLEOTIDE SEQUENCE [LARGE SCALE GENOMIC DNA]</scope>
    <source>
        <strain>AF16</strain>
    </source>
</reference>
<name>ATAT2_CAEBR</name>
<sequence length="263" mass="30477">MEIAFDLSSIFTDNIQRLEKADLLKYSPKQYWAVAKSIDTLGEMSSKFHGWKRIITMYEKIIDHDEDQTVYILWDKVDGNKSVLKGILRVGYKTLYLTDNEQNQYMEKAMCILDFFIVPTEQRSGNGFNMFDAMLKAENVLVEQCAFDKPSAALRQFLEKYYDQKEPVMQSNKYAVFPNFFIGRHPTVPFTPRQTKRASRASSAVSSHTTSRNTSPIGRNRPRHDSVADLMRQDNFPRGRSVIDPNSPAGFKLTRDQRHEPIW</sequence>
<keyword id="KW-0012">Acyltransferase</keyword>
<keyword id="KW-1185">Reference proteome</keyword>
<keyword id="KW-0808">Transferase</keyword>
<dbReference type="EC" id="2.3.1.108" evidence="1"/>
<dbReference type="EMBL" id="HE600983">
    <property type="protein sequence ID" value="CAP33196.1"/>
    <property type="molecule type" value="Genomic_DNA"/>
</dbReference>
<dbReference type="SMR" id="A8XKM2"/>
<dbReference type="FunCoup" id="A8XKM2">
    <property type="interactions" value="307"/>
</dbReference>
<dbReference type="STRING" id="6238.A8XKM2"/>
<dbReference type="EnsemblMetazoa" id="CBG14763.1">
    <property type="protein sequence ID" value="CBG14763.1"/>
    <property type="gene ID" value="WBGene00035165"/>
</dbReference>
<dbReference type="KEGG" id="cbr:CBG_14763"/>
<dbReference type="CTD" id="8586753"/>
<dbReference type="WormBase" id="CBG14763">
    <property type="protein sequence ID" value="CBP09734"/>
    <property type="gene ID" value="WBGene00035165"/>
    <property type="gene designation" value="Cbr-atat-2"/>
</dbReference>
<dbReference type="eggNOG" id="KOG4601">
    <property type="taxonomic scope" value="Eukaryota"/>
</dbReference>
<dbReference type="HOGENOM" id="CLU_025013_2_1_1"/>
<dbReference type="InParanoid" id="A8XKM2"/>
<dbReference type="OMA" id="FFIGRHP"/>
<dbReference type="Proteomes" id="UP000008549">
    <property type="component" value="Unassembled WGS sequence"/>
</dbReference>
<dbReference type="GO" id="GO:0005874">
    <property type="term" value="C:microtubule"/>
    <property type="evidence" value="ECO:0007669"/>
    <property type="project" value="InterPro"/>
</dbReference>
<dbReference type="GO" id="GO:0019799">
    <property type="term" value="F:tubulin N-acetyltransferase activity"/>
    <property type="evidence" value="ECO:0000250"/>
    <property type="project" value="UniProtKB"/>
</dbReference>
<dbReference type="GO" id="GO:0000226">
    <property type="term" value="P:microtubule cytoskeleton organization"/>
    <property type="evidence" value="ECO:0000318"/>
    <property type="project" value="GO_Central"/>
</dbReference>
<dbReference type="GO" id="GO:0048666">
    <property type="term" value="P:neuron development"/>
    <property type="evidence" value="ECO:0007669"/>
    <property type="project" value="UniProtKB-UniRule"/>
</dbReference>
<dbReference type="GO" id="GO:0070507">
    <property type="term" value="P:regulation of microtubule cytoskeleton organization"/>
    <property type="evidence" value="ECO:0007669"/>
    <property type="project" value="UniProtKB-UniRule"/>
</dbReference>
<dbReference type="GO" id="GO:0001966">
    <property type="term" value="P:thigmotaxis"/>
    <property type="evidence" value="ECO:0007669"/>
    <property type="project" value="EnsemblMetazoa"/>
</dbReference>
<dbReference type="FunFam" id="3.40.630.30:FF:000314">
    <property type="entry name" value="Alpha-tubulin N-acetyltransferase 2"/>
    <property type="match status" value="1"/>
</dbReference>
<dbReference type="Gene3D" id="3.40.630.30">
    <property type="match status" value="1"/>
</dbReference>
<dbReference type="HAMAP" id="MF_03130">
    <property type="entry name" value="mec17"/>
    <property type="match status" value="1"/>
</dbReference>
<dbReference type="InterPro" id="IPR038746">
    <property type="entry name" value="Atat"/>
</dbReference>
<dbReference type="InterPro" id="IPR007965">
    <property type="entry name" value="GNAT_ATAT"/>
</dbReference>
<dbReference type="PANTHER" id="PTHR12327">
    <property type="entry name" value="ALPHA-TUBULIN N-ACETYLTRANSFERASE 1"/>
    <property type="match status" value="1"/>
</dbReference>
<dbReference type="PANTHER" id="PTHR12327:SF1">
    <property type="entry name" value="ALPHA-TUBULIN N-ACETYLTRANSFERASE 2"/>
    <property type="match status" value="1"/>
</dbReference>
<dbReference type="Pfam" id="PF05301">
    <property type="entry name" value="Acetyltransf_16"/>
    <property type="match status" value="1"/>
</dbReference>
<dbReference type="PROSITE" id="PS51730">
    <property type="entry name" value="GNAT_ATAT"/>
    <property type="match status" value="1"/>
</dbReference>
<organism>
    <name type="scientific">Caenorhabditis briggsae</name>
    <dbReference type="NCBI Taxonomy" id="6238"/>
    <lineage>
        <taxon>Eukaryota</taxon>
        <taxon>Metazoa</taxon>
        <taxon>Ecdysozoa</taxon>
        <taxon>Nematoda</taxon>
        <taxon>Chromadorea</taxon>
        <taxon>Rhabditida</taxon>
        <taxon>Rhabditina</taxon>
        <taxon>Rhabditomorpha</taxon>
        <taxon>Rhabditoidea</taxon>
        <taxon>Rhabditidae</taxon>
        <taxon>Peloderinae</taxon>
        <taxon>Caenorhabditis</taxon>
    </lineage>
</organism>
<evidence type="ECO:0000255" key="1">
    <source>
        <dbReference type="HAMAP-Rule" id="MF_03130"/>
    </source>
</evidence>
<evidence type="ECO:0000256" key="2">
    <source>
        <dbReference type="SAM" id="MobiDB-lite"/>
    </source>
</evidence>
<proteinExistence type="inferred from homology"/>
<gene>
    <name type="primary">atat-2</name>
    <name type="ORF">CBG14763</name>
</gene>
<feature type="chain" id="PRO_0000402074" description="Alpha-tubulin N-acetyltransferase 2">
    <location>
        <begin position="1"/>
        <end position="263"/>
    </location>
</feature>
<feature type="domain" description="N-acetyltransferase" evidence="1">
    <location>
        <begin position="1"/>
        <end position="181"/>
    </location>
</feature>
<feature type="region of interest" description="Disordered" evidence="2">
    <location>
        <begin position="191"/>
        <end position="224"/>
    </location>
</feature>
<feature type="region of interest" description="Disordered" evidence="2">
    <location>
        <begin position="236"/>
        <end position="263"/>
    </location>
</feature>
<feature type="compositionally biased region" description="Low complexity" evidence="2">
    <location>
        <begin position="200"/>
        <end position="212"/>
    </location>
</feature>
<feature type="compositionally biased region" description="Basic and acidic residues" evidence="2">
    <location>
        <begin position="253"/>
        <end position="263"/>
    </location>
</feature>
<feature type="binding site" evidence="1">
    <location>
        <begin position="115"/>
        <end position="128"/>
    </location>
    <ligand>
        <name>acetyl-CoA</name>
        <dbReference type="ChEBI" id="CHEBI:57288"/>
    </ligand>
</feature>